<proteinExistence type="inferred from homology"/>
<organism>
    <name type="scientific">Salmonella agona (strain SL483)</name>
    <dbReference type="NCBI Taxonomy" id="454166"/>
    <lineage>
        <taxon>Bacteria</taxon>
        <taxon>Pseudomonadati</taxon>
        <taxon>Pseudomonadota</taxon>
        <taxon>Gammaproteobacteria</taxon>
        <taxon>Enterobacterales</taxon>
        <taxon>Enterobacteriaceae</taxon>
        <taxon>Salmonella</taxon>
    </lineage>
</organism>
<protein>
    <recommendedName>
        <fullName evidence="1">ATP synthase subunit delta</fullName>
    </recommendedName>
    <alternativeName>
        <fullName evidence="1">ATP synthase F(1) sector subunit delta</fullName>
    </alternativeName>
    <alternativeName>
        <fullName evidence="1">F-type ATPase subunit delta</fullName>
        <shortName evidence="1">F-ATPase subunit delta</shortName>
    </alternativeName>
</protein>
<name>ATPD_SALA4</name>
<dbReference type="EMBL" id="CP001138">
    <property type="protein sequence ID" value="ACH52878.1"/>
    <property type="molecule type" value="Genomic_DNA"/>
</dbReference>
<dbReference type="RefSeq" id="WP_001288957.1">
    <property type="nucleotide sequence ID" value="NC_011149.1"/>
</dbReference>
<dbReference type="SMR" id="B5EYZ9"/>
<dbReference type="KEGG" id="sea:SeAg_B4093"/>
<dbReference type="HOGENOM" id="CLU_085114_3_0_6"/>
<dbReference type="Proteomes" id="UP000008819">
    <property type="component" value="Chromosome"/>
</dbReference>
<dbReference type="GO" id="GO:0005886">
    <property type="term" value="C:plasma membrane"/>
    <property type="evidence" value="ECO:0007669"/>
    <property type="project" value="UniProtKB-SubCell"/>
</dbReference>
<dbReference type="GO" id="GO:0045259">
    <property type="term" value="C:proton-transporting ATP synthase complex"/>
    <property type="evidence" value="ECO:0007669"/>
    <property type="project" value="UniProtKB-KW"/>
</dbReference>
<dbReference type="GO" id="GO:0046933">
    <property type="term" value="F:proton-transporting ATP synthase activity, rotational mechanism"/>
    <property type="evidence" value="ECO:0007669"/>
    <property type="project" value="UniProtKB-UniRule"/>
</dbReference>
<dbReference type="FunFam" id="1.10.520.20:FF:000001">
    <property type="entry name" value="ATP synthase subunit delta"/>
    <property type="match status" value="1"/>
</dbReference>
<dbReference type="Gene3D" id="1.10.520.20">
    <property type="entry name" value="N-terminal domain of the delta subunit of the F1F0-ATP synthase"/>
    <property type="match status" value="1"/>
</dbReference>
<dbReference type="HAMAP" id="MF_01416">
    <property type="entry name" value="ATP_synth_delta_bact"/>
    <property type="match status" value="1"/>
</dbReference>
<dbReference type="InterPro" id="IPR026015">
    <property type="entry name" value="ATP_synth_OSCP/delta_N_sf"/>
</dbReference>
<dbReference type="InterPro" id="IPR020781">
    <property type="entry name" value="ATPase_OSCP/d_CS"/>
</dbReference>
<dbReference type="InterPro" id="IPR000711">
    <property type="entry name" value="ATPase_OSCP/dsu"/>
</dbReference>
<dbReference type="NCBIfam" id="TIGR01145">
    <property type="entry name" value="ATP_synt_delta"/>
    <property type="match status" value="1"/>
</dbReference>
<dbReference type="NCBIfam" id="NF004402">
    <property type="entry name" value="PRK05758.2-2"/>
    <property type="match status" value="1"/>
</dbReference>
<dbReference type="NCBIfam" id="NF004404">
    <property type="entry name" value="PRK05758.2-5"/>
    <property type="match status" value="1"/>
</dbReference>
<dbReference type="PANTHER" id="PTHR11910">
    <property type="entry name" value="ATP SYNTHASE DELTA CHAIN"/>
    <property type="match status" value="1"/>
</dbReference>
<dbReference type="Pfam" id="PF00213">
    <property type="entry name" value="OSCP"/>
    <property type="match status" value="1"/>
</dbReference>
<dbReference type="PRINTS" id="PR00125">
    <property type="entry name" value="ATPASEDELTA"/>
</dbReference>
<dbReference type="SUPFAM" id="SSF47928">
    <property type="entry name" value="N-terminal domain of the delta subunit of the F1F0-ATP synthase"/>
    <property type="match status" value="1"/>
</dbReference>
<dbReference type="PROSITE" id="PS00389">
    <property type="entry name" value="ATPASE_DELTA"/>
    <property type="match status" value="1"/>
</dbReference>
<feature type="chain" id="PRO_0000371111" description="ATP synthase subunit delta">
    <location>
        <begin position="1"/>
        <end position="177"/>
    </location>
</feature>
<comment type="function">
    <text evidence="1">F(1)F(0) ATP synthase produces ATP from ADP in the presence of a proton or sodium gradient. F-type ATPases consist of two structural domains, F(1) containing the extramembraneous catalytic core and F(0) containing the membrane proton channel, linked together by a central stalk and a peripheral stalk. During catalysis, ATP synthesis in the catalytic domain of F(1) is coupled via a rotary mechanism of the central stalk subunits to proton translocation.</text>
</comment>
<comment type="function">
    <text evidence="1">This protein is part of the stalk that links CF(0) to CF(1). It either transmits conformational changes from CF(0) to CF(1) or is implicated in proton conduction.</text>
</comment>
<comment type="subunit">
    <text evidence="1">F-type ATPases have 2 components, F(1) - the catalytic core - and F(0) - the membrane proton channel. F(1) has five subunits: alpha(3), beta(3), gamma(1), delta(1), epsilon(1). F(0) has three main subunits: a(1), b(2) and c(10-14). The alpha and beta chains form an alternating ring which encloses part of the gamma chain. F(1) is attached to F(0) by a central stalk formed by the gamma and epsilon chains, while a peripheral stalk is formed by the delta and b chains.</text>
</comment>
<comment type="subcellular location">
    <subcellularLocation>
        <location evidence="1">Cell inner membrane</location>
        <topology evidence="1">Peripheral membrane protein</topology>
    </subcellularLocation>
</comment>
<comment type="similarity">
    <text evidence="1">Belongs to the ATPase delta chain family.</text>
</comment>
<sequence length="177" mass="19412">MSEFVTVARPYAKAAFDFAVEHQSVERWQDMLAFAAEVTKNEQMAELLSGALAPETLAESFIAVCGEQLDENGQNLIRVMAENNRLNALPDVLEQFIHLRAASEATSEVEVTSATALSEEQLSKISAAMEKRLSRKVKLNCKIDKSVMAGVIIRAGDMVIDGSVRGRLERLADVLQS</sequence>
<evidence type="ECO:0000255" key="1">
    <source>
        <dbReference type="HAMAP-Rule" id="MF_01416"/>
    </source>
</evidence>
<gene>
    <name evidence="1" type="primary">atpH</name>
    <name type="ordered locus">SeAg_B4093</name>
</gene>
<keyword id="KW-0066">ATP synthesis</keyword>
<keyword id="KW-0997">Cell inner membrane</keyword>
<keyword id="KW-1003">Cell membrane</keyword>
<keyword id="KW-0139">CF(1)</keyword>
<keyword id="KW-0375">Hydrogen ion transport</keyword>
<keyword id="KW-0406">Ion transport</keyword>
<keyword id="KW-0472">Membrane</keyword>
<keyword id="KW-0813">Transport</keyword>
<reference key="1">
    <citation type="journal article" date="2011" name="J. Bacteriol.">
        <title>Comparative genomics of 28 Salmonella enterica isolates: evidence for CRISPR-mediated adaptive sublineage evolution.</title>
        <authorList>
            <person name="Fricke W.F."/>
            <person name="Mammel M.K."/>
            <person name="McDermott P.F."/>
            <person name="Tartera C."/>
            <person name="White D.G."/>
            <person name="Leclerc J.E."/>
            <person name="Ravel J."/>
            <person name="Cebula T.A."/>
        </authorList>
    </citation>
    <scope>NUCLEOTIDE SEQUENCE [LARGE SCALE GENOMIC DNA]</scope>
    <source>
        <strain>SL483</strain>
    </source>
</reference>
<accession>B5EYZ9</accession>